<proteinExistence type="inferred from homology"/>
<dbReference type="EC" id="3.6.1.15" evidence="1"/>
<dbReference type="EC" id="3.6.1.6" evidence="1"/>
<dbReference type="EMBL" id="AP008934">
    <property type="protein sequence ID" value="BAE18071.1"/>
    <property type="molecule type" value="Genomic_DNA"/>
</dbReference>
<dbReference type="RefSeq" id="WP_002482863.1">
    <property type="nucleotide sequence ID" value="NZ_MTGA01000031.1"/>
</dbReference>
<dbReference type="SMR" id="Q49YR2"/>
<dbReference type="KEGG" id="ssp:SSP0926"/>
<dbReference type="eggNOG" id="COG3557">
    <property type="taxonomic scope" value="Bacteria"/>
</dbReference>
<dbReference type="HOGENOM" id="CLU_109787_1_0_9"/>
<dbReference type="OrthoDB" id="1645325at2"/>
<dbReference type="Proteomes" id="UP000006371">
    <property type="component" value="Chromosome"/>
</dbReference>
<dbReference type="GO" id="GO:0000287">
    <property type="term" value="F:magnesium ion binding"/>
    <property type="evidence" value="ECO:0007669"/>
    <property type="project" value="UniProtKB-UniRule"/>
</dbReference>
<dbReference type="GO" id="GO:0017110">
    <property type="term" value="F:nucleoside diphosphate phosphatase activity"/>
    <property type="evidence" value="ECO:0007669"/>
    <property type="project" value="UniProtKB-UniRule"/>
</dbReference>
<dbReference type="GO" id="GO:0017111">
    <property type="term" value="F:ribonucleoside triphosphate phosphatase activity"/>
    <property type="evidence" value="ECO:0007669"/>
    <property type="project" value="UniProtKB-UniRule"/>
</dbReference>
<dbReference type="Gene3D" id="2.40.380.10">
    <property type="entry name" value="FomD-like"/>
    <property type="match status" value="1"/>
</dbReference>
<dbReference type="HAMAP" id="MF_01568">
    <property type="entry name" value="Ntdp"/>
    <property type="match status" value="1"/>
</dbReference>
<dbReference type="InterPro" id="IPR007295">
    <property type="entry name" value="DUF402"/>
</dbReference>
<dbReference type="InterPro" id="IPR035930">
    <property type="entry name" value="FomD-like_sf"/>
</dbReference>
<dbReference type="InterPro" id="IPR050212">
    <property type="entry name" value="Ntdp-like"/>
</dbReference>
<dbReference type="InterPro" id="IPR016882">
    <property type="entry name" value="SA1684"/>
</dbReference>
<dbReference type="NCBIfam" id="NF010183">
    <property type="entry name" value="PRK13662.1"/>
    <property type="match status" value="1"/>
</dbReference>
<dbReference type="PANTHER" id="PTHR39159">
    <property type="match status" value="1"/>
</dbReference>
<dbReference type="PANTHER" id="PTHR39159:SF1">
    <property type="entry name" value="UPF0374 PROTEIN YGAC"/>
    <property type="match status" value="1"/>
</dbReference>
<dbReference type="Pfam" id="PF04167">
    <property type="entry name" value="DUF402"/>
    <property type="match status" value="1"/>
</dbReference>
<dbReference type="PIRSF" id="PIRSF028345">
    <property type="entry name" value="UCP028345"/>
    <property type="match status" value="1"/>
</dbReference>
<dbReference type="SUPFAM" id="SSF159234">
    <property type="entry name" value="FomD-like"/>
    <property type="match status" value="1"/>
</dbReference>
<sequence>MVKESIPKEGQTIKIQSYKHDGNIHRVWSETTILKGTEHVVIGGNDHTLVTESDSRTWITREPAIVYFHSEFWFNVICMFREDGVYYYCNLSSPFVCDDEALKYIDYDLDIKVYPNGKYHLLDEDEYEQHMRQMNYSSDIDVILRRNVDILQQWIEQKKGPFAPDFIKVWRERYKKIRNY</sequence>
<reference key="1">
    <citation type="journal article" date="2005" name="Proc. Natl. Acad. Sci. U.S.A.">
        <title>Whole genome sequence of Staphylococcus saprophyticus reveals the pathogenesis of uncomplicated urinary tract infection.</title>
        <authorList>
            <person name="Kuroda M."/>
            <person name="Yamashita A."/>
            <person name="Hirakawa H."/>
            <person name="Kumano M."/>
            <person name="Morikawa K."/>
            <person name="Higashide M."/>
            <person name="Maruyama A."/>
            <person name="Inose Y."/>
            <person name="Matoba K."/>
            <person name="Toh H."/>
            <person name="Kuhara S."/>
            <person name="Hattori M."/>
            <person name="Ohta T."/>
        </authorList>
    </citation>
    <scope>NUCLEOTIDE SEQUENCE [LARGE SCALE GENOMIC DNA]</scope>
    <source>
        <strain>ATCC 15305 / DSM 20229 / NCIMB 8711 / NCTC 7292 / S-41</strain>
    </source>
</reference>
<keyword id="KW-0378">Hydrolase</keyword>
<keyword id="KW-0460">Magnesium</keyword>
<keyword id="KW-0479">Metal-binding</keyword>
<keyword id="KW-1185">Reference proteome</keyword>
<evidence type="ECO:0000255" key="1">
    <source>
        <dbReference type="HAMAP-Rule" id="MF_01568"/>
    </source>
</evidence>
<comment type="function">
    <text evidence="1">Has nucleoside phosphatase activity towards nucleoside triphosphates and nucleoside diphosphates.</text>
</comment>
<comment type="catalytic activity">
    <reaction evidence="1">
        <text>a ribonucleoside 5'-triphosphate + H2O = a ribonucleoside 5'-diphosphate + phosphate + H(+)</text>
        <dbReference type="Rhea" id="RHEA:23680"/>
        <dbReference type="ChEBI" id="CHEBI:15377"/>
        <dbReference type="ChEBI" id="CHEBI:15378"/>
        <dbReference type="ChEBI" id="CHEBI:43474"/>
        <dbReference type="ChEBI" id="CHEBI:57930"/>
        <dbReference type="ChEBI" id="CHEBI:61557"/>
        <dbReference type="EC" id="3.6.1.15"/>
    </reaction>
</comment>
<comment type="catalytic activity">
    <reaction evidence="1">
        <text>a ribonucleoside 5'-diphosphate + H2O = a ribonucleoside 5'-phosphate + phosphate + H(+)</text>
        <dbReference type="Rhea" id="RHEA:36799"/>
        <dbReference type="ChEBI" id="CHEBI:15377"/>
        <dbReference type="ChEBI" id="CHEBI:15378"/>
        <dbReference type="ChEBI" id="CHEBI:43474"/>
        <dbReference type="ChEBI" id="CHEBI:57930"/>
        <dbReference type="ChEBI" id="CHEBI:58043"/>
        <dbReference type="EC" id="3.6.1.6"/>
    </reaction>
</comment>
<comment type="cofactor">
    <cofactor evidence="1">
        <name>Mg(2+)</name>
        <dbReference type="ChEBI" id="CHEBI:18420"/>
    </cofactor>
</comment>
<comment type="similarity">
    <text evidence="1">Belongs to the Ntdp family.</text>
</comment>
<name>NTDP_STAS1</name>
<organism>
    <name type="scientific">Staphylococcus saprophyticus subsp. saprophyticus (strain ATCC 15305 / DSM 20229 / NCIMB 8711 / NCTC 7292 / S-41)</name>
    <dbReference type="NCBI Taxonomy" id="342451"/>
    <lineage>
        <taxon>Bacteria</taxon>
        <taxon>Bacillati</taxon>
        <taxon>Bacillota</taxon>
        <taxon>Bacilli</taxon>
        <taxon>Bacillales</taxon>
        <taxon>Staphylococcaceae</taxon>
        <taxon>Staphylococcus</taxon>
    </lineage>
</organism>
<protein>
    <recommendedName>
        <fullName evidence="1">Nucleoside triphosphate/diphosphate phosphatase</fullName>
        <ecNumber evidence="1">3.6.1.15</ecNumber>
        <ecNumber evidence="1">3.6.1.6</ecNumber>
    </recommendedName>
</protein>
<gene>
    <name type="ordered locus">SSP0926</name>
</gene>
<accession>Q49YR2</accession>
<feature type="chain" id="PRO_0000248116" description="Nucleoside triphosphate/diphosphate phosphatase">
    <location>
        <begin position="1"/>
        <end position="180"/>
    </location>
</feature>
<feature type="active site" description="Proton donor" evidence="1">
    <location>
        <position position="26"/>
    </location>
</feature>
<feature type="binding site" evidence="1">
    <location>
        <position position="90"/>
    </location>
    <ligand>
        <name>Mg(2+)</name>
        <dbReference type="ChEBI" id="CHEBI:18420"/>
        <label>1</label>
    </ligand>
</feature>
<feature type="binding site" evidence="1">
    <location>
        <position position="106"/>
    </location>
    <ligand>
        <name>Mg(2+)</name>
        <dbReference type="ChEBI" id="CHEBI:18420"/>
        <label>1</label>
    </ligand>
</feature>
<feature type="binding site" evidence="1">
    <location>
        <position position="108"/>
    </location>
    <ligand>
        <name>Mg(2+)</name>
        <dbReference type="ChEBI" id="CHEBI:18420"/>
        <label>2</label>
    </ligand>
</feature>
<feature type="binding site" evidence="1">
    <location>
        <position position="110"/>
    </location>
    <ligand>
        <name>Mg(2+)</name>
        <dbReference type="ChEBI" id="CHEBI:18420"/>
        <label>1</label>
    </ligand>
</feature>
<feature type="binding site" evidence="1">
    <location>
        <position position="110"/>
    </location>
    <ligand>
        <name>Mg(2+)</name>
        <dbReference type="ChEBI" id="CHEBI:18420"/>
        <label>2</label>
    </ligand>
</feature>
<feature type="binding site" evidence="1">
    <location>
        <position position="123"/>
    </location>
    <ligand>
        <name>Mg(2+)</name>
        <dbReference type="ChEBI" id="CHEBI:18420"/>
        <label>2</label>
    </ligand>
</feature>
<feature type="binding site" evidence="1">
    <location>
        <position position="126"/>
    </location>
    <ligand>
        <name>Mg(2+)</name>
        <dbReference type="ChEBI" id="CHEBI:18420"/>
        <label>2</label>
    </ligand>
</feature>